<name>BLUB_RHIME</name>
<keyword id="KW-0002">3D-structure</keyword>
<keyword id="KW-0169">Cobalamin biosynthesis</keyword>
<keyword id="KW-0285">Flavoprotein</keyword>
<keyword id="KW-0288">FMN</keyword>
<keyword id="KW-0520">NAD</keyword>
<keyword id="KW-0521">NADP</keyword>
<keyword id="KW-0547">Nucleotide-binding</keyword>
<keyword id="KW-0560">Oxidoreductase</keyword>
<keyword id="KW-1185">Reference proteome</keyword>
<organism>
    <name type="scientific">Rhizobium meliloti (strain 1021)</name>
    <name type="common">Ensifer meliloti</name>
    <name type="synonym">Sinorhizobium meliloti</name>
    <dbReference type="NCBI Taxonomy" id="266834"/>
    <lineage>
        <taxon>Bacteria</taxon>
        <taxon>Pseudomonadati</taxon>
        <taxon>Pseudomonadota</taxon>
        <taxon>Alphaproteobacteria</taxon>
        <taxon>Hyphomicrobiales</taxon>
        <taxon>Rhizobiaceae</taxon>
        <taxon>Sinorhizobium/Ensifer group</taxon>
        <taxon>Sinorhizobium</taxon>
    </lineage>
</organism>
<dbReference type="EC" id="1.13.11.79"/>
<dbReference type="EMBL" id="AL591688">
    <property type="protein sequence ID" value="CAC46420.1"/>
    <property type="molecule type" value="Genomic_DNA"/>
</dbReference>
<dbReference type="RefSeq" id="NP_385947.1">
    <property type="nucleotide sequence ID" value="NC_003047.1"/>
</dbReference>
<dbReference type="RefSeq" id="WP_010969508.1">
    <property type="nucleotide sequence ID" value="NC_003047.1"/>
</dbReference>
<dbReference type="PDB" id="2ISJ">
    <property type="method" value="X-ray"/>
    <property type="resolution" value="2.30 A"/>
    <property type="chains" value="A/B/C/D/E/F/G/H=1-227"/>
</dbReference>
<dbReference type="PDB" id="2ISK">
    <property type="method" value="X-ray"/>
    <property type="resolution" value="2.10 A"/>
    <property type="chains" value="A/B/C/D/E/F/G/H=1-227"/>
</dbReference>
<dbReference type="PDB" id="2ISL">
    <property type="method" value="X-ray"/>
    <property type="resolution" value="2.90 A"/>
    <property type="chains" value="A/B/C/D/E/F/G/H=1-227"/>
</dbReference>
<dbReference type="PDBsum" id="2ISJ"/>
<dbReference type="PDBsum" id="2ISK"/>
<dbReference type="PDBsum" id="2ISL"/>
<dbReference type="SMR" id="Q92PC8"/>
<dbReference type="DIP" id="DIP-60275N"/>
<dbReference type="EnsemblBacteria" id="CAC46420">
    <property type="protein sequence ID" value="CAC46420"/>
    <property type="gene ID" value="SMc00166"/>
</dbReference>
<dbReference type="KEGG" id="sme:SMc00166"/>
<dbReference type="PATRIC" id="fig|266834.11.peg.3284"/>
<dbReference type="eggNOG" id="COG0778">
    <property type="taxonomic scope" value="Bacteria"/>
</dbReference>
<dbReference type="HOGENOM" id="CLU_070764_3_1_5"/>
<dbReference type="OrthoDB" id="9773807at2"/>
<dbReference type="BioCyc" id="MetaCyc:MONOMER-13177"/>
<dbReference type="BRENDA" id="1.14.99.40">
    <property type="organism ID" value="5347"/>
</dbReference>
<dbReference type="EvolutionaryTrace" id="Q92PC8"/>
<dbReference type="Proteomes" id="UP000001976">
    <property type="component" value="Chromosome"/>
</dbReference>
<dbReference type="GO" id="GO:0102919">
    <property type="term" value="F:5,6-dimethylbenzimidazole synthase activity"/>
    <property type="evidence" value="ECO:0007669"/>
    <property type="project" value="UniProtKB-EC"/>
</dbReference>
<dbReference type="GO" id="GO:0000166">
    <property type="term" value="F:nucleotide binding"/>
    <property type="evidence" value="ECO:0007669"/>
    <property type="project" value="UniProtKB-KW"/>
</dbReference>
<dbReference type="GO" id="GO:0016705">
    <property type="term" value="F:oxidoreductase activity, acting on paired donors, with incorporation or reduction of molecular oxygen"/>
    <property type="evidence" value="ECO:0000314"/>
    <property type="project" value="UniProtKB"/>
</dbReference>
<dbReference type="GO" id="GO:0009236">
    <property type="term" value="P:cobalamin biosynthetic process"/>
    <property type="evidence" value="ECO:0000314"/>
    <property type="project" value="UniProtKB"/>
</dbReference>
<dbReference type="CDD" id="cd02145">
    <property type="entry name" value="BluB"/>
    <property type="match status" value="1"/>
</dbReference>
<dbReference type="FunFam" id="3.40.109.10:FF:000013">
    <property type="entry name" value="5,6-dimethylbenzimidazole synthase"/>
    <property type="match status" value="1"/>
</dbReference>
<dbReference type="Gene3D" id="3.40.109.10">
    <property type="entry name" value="NADH Oxidase"/>
    <property type="match status" value="1"/>
</dbReference>
<dbReference type="InterPro" id="IPR012825">
    <property type="entry name" value="BluB"/>
</dbReference>
<dbReference type="InterPro" id="IPR029479">
    <property type="entry name" value="Nitroreductase"/>
</dbReference>
<dbReference type="InterPro" id="IPR000415">
    <property type="entry name" value="Nitroreductase-like"/>
</dbReference>
<dbReference type="InterPro" id="IPR050627">
    <property type="entry name" value="Nitroreductase/BluB"/>
</dbReference>
<dbReference type="NCBIfam" id="TIGR02476">
    <property type="entry name" value="BluB"/>
    <property type="match status" value="1"/>
</dbReference>
<dbReference type="PANTHER" id="PTHR23026:SF90">
    <property type="entry name" value="IODOTYROSINE DEIODINASE 1"/>
    <property type="match status" value="1"/>
</dbReference>
<dbReference type="PANTHER" id="PTHR23026">
    <property type="entry name" value="NADPH NITROREDUCTASE"/>
    <property type="match status" value="1"/>
</dbReference>
<dbReference type="Pfam" id="PF00881">
    <property type="entry name" value="Nitroreductase"/>
    <property type="match status" value="1"/>
</dbReference>
<dbReference type="SUPFAM" id="SSF55469">
    <property type="entry name" value="FMN-dependent nitroreductase-like"/>
    <property type="match status" value="1"/>
</dbReference>
<comment type="function">
    <text evidence="1 2">Involved in the biosynthesis of cobalamin (vitamin B12). Catalyzes the oxidative fragmentation and contraction of the isoalloxazine heterocycle and the cleavage of the ribityl tail of FMN(2) to form 5,6-dimethylbenzimidazole (DMB) and D-erythrose 4-phosphate (E4P). NAD(P)H is only required initially to reduce FMN and oxygen drives the oxidative fragmentation.</text>
</comment>
<comment type="catalytic activity">
    <reaction evidence="2">
        <text>FMNH2 + O2 = dialurate + 5,6-dimethylbenzimidazole + D-erythrose 4-phosphate + H(+)</text>
        <dbReference type="Rhea" id="RHEA:27345"/>
        <dbReference type="ChEBI" id="CHEBI:15378"/>
        <dbReference type="ChEBI" id="CHEBI:15379"/>
        <dbReference type="ChEBI" id="CHEBI:15890"/>
        <dbReference type="ChEBI" id="CHEBI:16897"/>
        <dbReference type="ChEBI" id="CHEBI:57618"/>
        <dbReference type="ChEBI" id="CHEBI:140629"/>
        <dbReference type="EC" id="1.13.11.79"/>
    </reaction>
</comment>
<comment type="activity regulation">
    <text evidence="2">Inhibited by high concentrations of FMN.</text>
</comment>
<comment type="biophysicochemical properties">
    <kinetics>
        <KM evidence="2">64 uM for FMN</KM>
        <KM evidence="2">4.4 mM for NADP</KM>
        <KM evidence="2">5.1 mM for NAD</KM>
        <text>kcat is 15 h(-1), 7.2 h(-1) and 7.6 h(-1) for FMN, NAD and NADP, respectively.</text>
    </kinetics>
</comment>
<comment type="subunit">
    <text evidence="2">Homooctamer.</text>
</comment>
<comment type="disruption phenotype">
    <text evidence="1">Cells lacking this gene are unable to grow in minimal media and fails to establish a symbiosis with alfalfa, and these defects can be rescued by the addition of vitamin B12 (cyanocobalamin) or the lower ligand of cobalamin, 5,6-dimethylbenzimidazole (DMB).</text>
</comment>
<comment type="similarity">
    <text evidence="3">Belongs to the BluB family.</text>
</comment>
<sequence length="227" mass="25508">MLPDPNGCLTAAGAFSSDERAAVYRAIETRRDVRDEFLPEPLSEELIARLLGAAHQAPSVGFMQPWNFVLVRQDETREKVWQAFQRANDEAAEMFSGERQAKYRSLKLEGIRKAPLSICVTCDRTRGGAVVLGRTHNPQMDLYSTVCAVQNLWLAARAEGVGVGWVSIFHESEIKAILGIPDHVEIVAWLCLGFVDRLYQEPELAAKGWRQRLPLEDLVFEEGWGVR</sequence>
<gene>
    <name type="primary">bluB</name>
    <name type="ordered locus">R01841</name>
    <name type="ORF">SMc00166</name>
</gene>
<reference key="1">
    <citation type="journal article" date="2001" name="Proc. Natl. Acad. Sci. U.S.A.">
        <title>Analysis of the chromosome sequence of the legume symbiont Sinorhizobium meliloti strain 1021.</title>
        <authorList>
            <person name="Capela D."/>
            <person name="Barloy-Hubler F."/>
            <person name="Gouzy J."/>
            <person name="Bothe G."/>
            <person name="Ampe F."/>
            <person name="Batut J."/>
            <person name="Boistard P."/>
            <person name="Becker A."/>
            <person name="Boutry M."/>
            <person name="Cadieu E."/>
            <person name="Dreano S."/>
            <person name="Gloux S."/>
            <person name="Godrie T."/>
            <person name="Goffeau A."/>
            <person name="Kahn D."/>
            <person name="Kiss E."/>
            <person name="Lelaure V."/>
            <person name="Masuy D."/>
            <person name="Pohl T."/>
            <person name="Portetelle D."/>
            <person name="Puehler A."/>
            <person name="Purnelle B."/>
            <person name="Ramsperger U."/>
            <person name="Renard C."/>
            <person name="Thebault P."/>
            <person name="Vandenbol M."/>
            <person name="Weidner S."/>
            <person name="Galibert F."/>
        </authorList>
    </citation>
    <scope>NUCLEOTIDE SEQUENCE [LARGE SCALE GENOMIC DNA]</scope>
    <source>
        <strain>1021</strain>
    </source>
</reference>
<reference key="2">
    <citation type="journal article" date="2001" name="Science">
        <title>The composite genome of the legume symbiont Sinorhizobium meliloti.</title>
        <authorList>
            <person name="Galibert F."/>
            <person name="Finan T.M."/>
            <person name="Long S.R."/>
            <person name="Puehler A."/>
            <person name="Abola P."/>
            <person name="Ampe F."/>
            <person name="Barloy-Hubler F."/>
            <person name="Barnett M.J."/>
            <person name="Becker A."/>
            <person name="Boistard P."/>
            <person name="Bothe G."/>
            <person name="Boutry M."/>
            <person name="Bowser L."/>
            <person name="Buhrmester J."/>
            <person name="Cadieu E."/>
            <person name="Capela D."/>
            <person name="Chain P."/>
            <person name="Cowie A."/>
            <person name="Davis R.W."/>
            <person name="Dreano S."/>
            <person name="Federspiel N.A."/>
            <person name="Fisher R.F."/>
            <person name="Gloux S."/>
            <person name="Godrie T."/>
            <person name="Goffeau A."/>
            <person name="Golding B."/>
            <person name="Gouzy J."/>
            <person name="Gurjal M."/>
            <person name="Hernandez-Lucas I."/>
            <person name="Hong A."/>
            <person name="Huizar L."/>
            <person name="Hyman R.W."/>
            <person name="Jones T."/>
            <person name="Kahn D."/>
            <person name="Kahn M.L."/>
            <person name="Kalman S."/>
            <person name="Keating D.H."/>
            <person name="Kiss E."/>
            <person name="Komp C."/>
            <person name="Lelaure V."/>
            <person name="Masuy D."/>
            <person name="Palm C."/>
            <person name="Peck M.C."/>
            <person name="Pohl T.M."/>
            <person name="Portetelle D."/>
            <person name="Purnelle B."/>
            <person name="Ramsperger U."/>
            <person name="Surzycki R."/>
            <person name="Thebault P."/>
            <person name="Vandenbol M."/>
            <person name="Vorhoelter F.J."/>
            <person name="Weidner S."/>
            <person name="Wells D.H."/>
            <person name="Wong K."/>
            <person name="Yeh K.-C."/>
            <person name="Batut J."/>
        </authorList>
    </citation>
    <scope>NUCLEOTIDE SEQUENCE [LARGE SCALE GENOMIC DNA]</scope>
    <source>
        <strain>1021</strain>
    </source>
</reference>
<reference key="3">
    <citation type="journal article" date="2006" name="Proc. Natl. Acad. Sci. U.S.A.">
        <title>Sinorhizobium meliloti bluB is necessary for production of 5,6-dimethylbenzimidazole, the lower ligand of B12.</title>
        <authorList>
            <person name="Campbell G.R."/>
            <person name="Taga M.E."/>
            <person name="Mistry K."/>
            <person name="Lloret J."/>
            <person name="Anderson P.J."/>
            <person name="Roth J.R."/>
            <person name="Walker G.C."/>
        </authorList>
    </citation>
    <scope>FUNCTION</scope>
    <scope>DISRUPTION PHENOTYPE</scope>
</reference>
<reference key="4">
    <citation type="journal article" date="2007" name="Nature">
        <title>BluB cannibalizes flavin to form the lower ligand of vitamin B12.</title>
        <authorList>
            <person name="Taga M.E."/>
            <person name="Larsen N.A."/>
            <person name="Howard-Jones A.R."/>
            <person name="Walsh C.T."/>
            <person name="Walker G.C."/>
        </authorList>
    </citation>
    <scope>X-RAY CRYSTALLOGRAPHY (2.10 ANGSTROMS) IN COMPLEX WITH FMNH(2) AND DIOXYGEN</scope>
    <scope>FUNCTION</scope>
    <scope>CATALYTIC ACTIVITY</scope>
    <scope>MUTAGENESIS OF ASP-32 AND SER-167</scope>
    <scope>BIOPHYSICOCHEMICAL PROPERTIES</scope>
    <scope>ACTIVITY REGULATION</scope>
    <scope>REACTION MECHANISM</scope>
    <scope>SUBUNIT</scope>
</reference>
<protein>
    <recommendedName>
        <fullName>5,6-dimethylbenzimidazole synthase</fullName>
        <shortName>DMB synthase</shortName>
        <ecNumber>1.13.11.79</ecNumber>
    </recommendedName>
</protein>
<evidence type="ECO:0000269" key="1">
    <source>
    </source>
</evidence>
<evidence type="ECO:0000269" key="2">
    <source>
    </source>
</evidence>
<evidence type="ECO:0000305" key="3"/>
<evidence type="ECO:0007829" key="4">
    <source>
        <dbReference type="PDB" id="2ISK"/>
    </source>
</evidence>
<proteinExistence type="evidence at protein level"/>
<feature type="chain" id="PRO_0000424085" description="5,6-dimethylbenzimidazole synthase">
    <location>
        <begin position="1"/>
        <end position="227"/>
    </location>
</feature>
<feature type="binding site">
    <location>
        <begin position="30"/>
        <end position="34"/>
    </location>
    <ligand>
        <name>FMN</name>
        <dbReference type="ChEBI" id="CHEBI:58210"/>
    </ligand>
</feature>
<feature type="binding site">
    <location>
        <position position="59"/>
    </location>
    <ligand>
        <name>FMN</name>
        <dbReference type="ChEBI" id="CHEBI:58210"/>
    </ligand>
</feature>
<feature type="binding site">
    <location>
        <position position="108"/>
    </location>
    <ligand>
        <name>FMN</name>
        <dbReference type="ChEBI" id="CHEBI:58210"/>
    </ligand>
</feature>
<feature type="binding site">
    <location>
        <position position="167"/>
    </location>
    <ligand>
        <name>FMN</name>
        <dbReference type="ChEBI" id="CHEBI:58210"/>
    </ligand>
</feature>
<feature type="mutagenesis site" description="Abrogates DMB formation but retains flavin binding." evidence="2">
    <original>D</original>
    <variation>A</variation>
    <variation>N</variation>
    <variation>S</variation>
    <location>
        <position position="32"/>
    </location>
</feature>
<feature type="mutagenesis site" description="Completely abolishes DMB formation." evidence="2">
    <original>S</original>
    <variation>C</variation>
    <location>
        <position position="167"/>
    </location>
</feature>
<feature type="mutagenesis site" description="Reduces DMB formation by 30-fold." evidence="2">
    <original>S</original>
    <variation>G</variation>
    <location>
        <position position="167"/>
    </location>
</feature>
<feature type="helix" evidence="4">
    <location>
        <begin position="17"/>
        <end position="29"/>
    </location>
</feature>
<feature type="helix" evidence="4">
    <location>
        <begin position="44"/>
        <end position="55"/>
    </location>
</feature>
<feature type="helix" evidence="4">
    <location>
        <begin position="60"/>
        <end position="62"/>
    </location>
</feature>
<feature type="strand" evidence="4">
    <location>
        <begin position="66"/>
        <end position="71"/>
    </location>
</feature>
<feature type="helix" evidence="4">
    <location>
        <begin position="74"/>
        <end position="93"/>
    </location>
</feature>
<feature type="helix" evidence="4">
    <location>
        <begin position="97"/>
        <end position="105"/>
    </location>
</feature>
<feature type="turn" evidence="4">
    <location>
        <begin position="111"/>
        <end position="113"/>
    </location>
</feature>
<feature type="strand" evidence="4">
    <location>
        <begin position="114"/>
        <end position="123"/>
    </location>
</feature>
<feature type="turn" evidence="4">
    <location>
        <begin position="124"/>
        <end position="127"/>
    </location>
</feature>
<feature type="helix" evidence="4">
    <location>
        <begin position="140"/>
        <end position="159"/>
    </location>
</feature>
<feature type="strand" evidence="4">
    <location>
        <begin position="161"/>
        <end position="165"/>
    </location>
</feature>
<feature type="helix" evidence="4">
    <location>
        <begin position="171"/>
        <end position="178"/>
    </location>
</feature>
<feature type="strand" evidence="4">
    <location>
        <begin position="184"/>
        <end position="194"/>
    </location>
</feature>
<feature type="strand" evidence="4">
    <location>
        <begin position="196"/>
        <end position="198"/>
    </location>
</feature>
<feature type="helix" evidence="4">
    <location>
        <begin position="203"/>
        <end position="206"/>
    </location>
</feature>
<feature type="helix" evidence="4">
    <location>
        <begin position="215"/>
        <end position="218"/>
    </location>
</feature>
<feature type="strand" evidence="4">
    <location>
        <begin position="219"/>
        <end position="223"/>
    </location>
</feature>
<accession>Q92PC8</accession>